<gene>
    <name evidence="1" type="primary">rplU</name>
    <name type="ordered locus">spr1012</name>
</gene>
<name>RL21_STRR6</name>
<feature type="chain" id="PRO_0000269392" description="Large ribosomal subunit protein bL21">
    <location>
        <begin position="1"/>
        <end position="104"/>
    </location>
</feature>
<keyword id="KW-1185">Reference proteome</keyword>
<keyword id="KW-0687">Ribonucleoprotein</keyword>
<keyword id="KW-0689">Ribosomal protein</keyword>
<keyword id="KW-0694">RNA-binding</keyword>
<keyword id="KW-0699">rRNA-binding</keyword>
<proteinExistence type="inferred from homology"/>
<dbReference type="EMBL" id="AE007317">
    <property type="protein sequence ID" value="AAK99816.1"/>
    <property type="molecule type" value="Genomic_DNA"/>
</dbReference>
<dbReference type="PIR" id="D97998">
    <property type="entry name" value="D97998"/>
</dbReference>
<dbReference type="PIR" id="G95127">
    <property type="entry name" value="G95127"/>
</dbReference>
<dbReference type="RefSeq" id="NP_358606.1">
    <property type="nucleotide sequence ID" value="NC_003098.1"/>
</dbReference>
<dbReference type="RefSeq" id="WP_000109141.1">
    <property type="nucleotide sequence ID" value="NC_003098.1"/>
</dbReference>
<dbReference type="SMR" id="Q8CWR5"/>
<dbReference type="STRING" id="171101.spr1012"/>
<dbReference type="GeneID" id="93739805"/>
<dbReference type="KEGG" id="spr:spr1012"/>
<dbReference type="PATRIC" id="fig|171101.6.peg.1102"/>
<dbReference type="eggNOG" id="COG0261">
    <property type="taxonomic scope" value="Bacteria"/>
</dbReference>
<dbReference type="HOGENOM" id="CLU_061463_3_1_9"/>
<dbReference type="PRO" id="PR:Q8CWR5"/>
<dbReference type="Proteomes" id="UP000000586">
    <property type="component" value="Chromosome"/>
</dbReference>
<dbReference type="GO" id="GO:0005737">
    <property type="term" value="C:cytoplasm"/>
    <property type="evidence" value="ECO:0007669"/>
    <property type="project" value="UniProtKB-ARBA"/>
</dbReference>
<dbReference type="GO" id="GO:1990904">
    <property type="term" value="C:ribonucleoprotein complex"/>
    <property type="evidence" value="ECO:0007669"/>
    <property type="project" value="UniProtKB-KW"/>
</dbReference>
<dbReference type="GO" id="GO:0005840">
    <property type="term" value="C:ribosome"/>
    <property type="evidence" value="ECO:0007669"/>
    <property type="project" value="UniProtKB-KW"/>
</dbReference>
<dbReference type="GO" id="GO:0019843">
    <property type="term" value="F:rRNA binding"/>
    <property type="evidence" value="ECO:0007669"/>
    <property type="project" value="UniProtKB-UniRule"/>
</dbReference>
<dbReference type="GO" id="GO:0003735">
    <property type="term" value="F:structural constituent of ribosome"/>
    <property type="evidence" value="ECO:0000318"/>
    <property type="project" value="GO_Central"/>
</dbReference>
<dbReference type="GO" id="GO:0006412">
    <property type="term" value="P:translation"/>
    <property type="evidence" value="ECO:0007669"/>
    <property type="project" value="UniProtKB-UniRule"/>
</dbReference>
<dbReference type="HAMAP" id="MF_01363">
    <property type="entry name" value="Ribosomal_bL21"/>
    <property type="match status" value="1"/>
</dbReference>
<dbReference type="InterPro" id="IPR028909">
    <property type="entry name" value="bL21-like"/>
</dbReference>
<dbReference type="InterPro" id="IPR036164">
    <property type="entry name" value="bL21-like_sf"/>
</dbReference>
<dbReference type="InterPro" id="IPR001787">
    <property type="entry name" value="Ribosomal_bL21"/>
</dbReference>
<dbReference type="InterPro" id="IPR018258">
    <property type="entry name" value="Ribosomal_bL21_CS"/>
</dbReference>
<dbReference type="NCBIfam" id="TIGR00061">
    <property type="entry name" value="L21"/>
    <property type="match status" value="1"/>
</dbReference>
<dbReference type="PANTHER" id="PTHR21349">
    <property type="entry name" value="50S RIBOSOMAL PROTEIN L21"/>
    <property type="match status" value="1"/>
</dbReference>
<dbReference type="PANTHER" id="PTHR21349:SF0">
    <property type="entry name" value="LARGE RIBOSOMAL SUBUNIT PROTEIN BL21M"/>
    <property type="match status" value="1"/>
</dbReference>
<dbReference type="Pfam" id="PF00829">
    <property type="entry name" value="Ribosomal_L21p"/>
    <property type="match status" value="1"/>
</dbReference>
<dbReference type="SUPFAM" id="SSF141091">
    <property type="entry name" value="L21p-like"/>
    <property type="match status" value="1"/>
</dbReference>
<dbReference type="PROSITE" id="PS01169">
    <property type="entry name" value="RIBOSOMAL_L21"/>
    <property type="match status" value="1"/>
</dbReference>
<evidence type="ECO:0000255" key="1">
    <source>
        <dbReference type="HAMAP-Rule" id="MF_01363"/>
    </source>
</evidence>
<evidence type="ECO:0000305" key="2"/>
<organism>
    <name type="scientific">Streptococcus pneumoniae (strain ATCC BAA-255 / R6)</name>
    <dbReference type="NCBI Taxonomy" id="171101"/>
    <lineage>
        <taxon>Bacteria</taxon>
        <taxon>Bacillati</taxon>
        <taxon>Bacillota</taxon>
        <taxon>Bacilli</taxon>
        <taxon>Lactobacillales</taxon>
        <taxon>Streptococcaceae</taxon>
        <taxon>Streptococcus</taxon>
    </lineage>
</organism>
<accession>Q8CWR5</accession>
<reference key="1">
    <citation type="journal article" date="2001" name="J. Bacteriol.">
        <title>Genome of the bacterium Streptococcus pneumoniae strain R6.</title>
        <authorList>
            <person name="Hoskins J."/>
            <person name="Alborn W.E. Jr."/>
            <person name="Arnold J."/>
            <person name="Blaszczak L.C."/>
            <person name="Burgett S."/>
            <person name="DeHoff B.S."/>
            <person name="Estrem S.T."/>
            <person name="Fritz L."/>
            <person name="Fu D.-J."/>
            <person name="Fuller W."/>
            <person name="Geringer C."/>
            <person name="Gilmour R."/>
            <person name="Glass J.S."/>
            <person name="Khoja H."/>
            <person name="Kraft A.R."/>
            <person name="Lagace R.E."/>
            <person name="LeBlanc D.J."/>
            <person name="Lee L.N."/>
            <person name="Lefkowitz E.J."/>
            <person name="Lu J."/>
            <person name="Matsushima P."/>
            <person name="McAhren S.M."/>
            <person name="McHenney M."/>
            <person name="McLeaster K."/>
            <person name="Mundy C.W."/>
            <person name="Nicas T.I."/>
            <person name="Norris F.H."/>
            <person name="O'Gara M."/>
            <person name="Peery R.B."/>
            <person name="Robertson G.T."/>
            <person name="Rockey P."/>
            <person name="Sun P.-M."/>
            <person name="Winkler M.E."/>
            <person name="Yang Y."/>
            <person name="Young-Bellido M."/>
            <person name="Zhao G."/>
            <person name="Zook C.A."/>
            <person name="Baltz R.H."/>
            <person name="Jaskunas S.R."/>
            <person name="Rosteck P.R. Jr."/>
            <person name="Skatrud P.L."/>
            <person name="Glass J.I."/>
        </authorList>
    </citation>
    <scope>NUCLEOTIDE SEQUENCE [LARGE SCALE GENOMIC DNA]</scope>
    <source>
        <strain>ATCC BAA-255 / R6</strain>
    </source>
</reference>
<protein>
    <recommendedName>
        <fullName evidence="1">Large ribosomal subunit protein bL21</fullName>
    </recommendedName>
    <alternativeName>
        <fullName evidence="2">50S ribosomal protein L21</fullName>
    </alternativeName>
</protein>
<sequence length="104" mass="11197">MSTYAIIKTGGKQVKVEVGQAVYVEKLNVEAGQEVTFNEVVLVGGENTVVGTPLVAGATVVGTVEKQGKQKKVVTYKYKPKKGSHRKQGHRQPYTKVVINAINA</sequence>
<comment type="function">
    <text evidence="1">This protein binds to 23S rRNA in the presence of protein L20.</text>
</comment>
<comment type="subunit">
    <text evidence="1">Part of the 50S ribosomal subunit. Contacts protein L20.</text>
</comment>
<comment type="similarity">
    <text evidence="1">Belongs to the bacterial ribosomal protein bL21 family.</text>
</comment>